<gene>
    <name type="primary">s100a10</name>
</gene>
<comment type="function">
    <text>Because p10 induces the dimerization of annexin II (p36), it may function as a regulator of protein phosphorylation in that the p36 monomer is the preferred target (in vitro) of tyrosine-specific kinase.</text>
</comment>
<comment type="subunit">
    <text>Tetramer of 2 light chains (p10) and 2 heavy chains (annexin II).</text>
</comment>
<comment type="miscellaneous">
    <text>Does not appear to bind calcium. Contains 2 ancestral calcium site related to EF-hand domains that have lost their ability to bind calcium.</text>
</comment>
<comment type="similarity">
    <text evidence="1">Belongs to the S-100 family.</text>
</comment>
<sequence length="96" mass="11329">MVAPSELEHSMEKMLLTFHKFAGEKNYMNRDDLQKLLDSEFSEFLKNQNDPMTVDKIMKDLDDCRKGQVNFRSYCSLIAGLLIACNEYYVKHMKKR</sequence>
<name>S10AA_XENLA</name>
<dbReference type="EMBL" id="M38593">
    <property type="protein sequence ID" value="AAA49676.1"/>
    <property type="molecule type" value="mRNA"/>
</dbReference>
<dbReference type="PIR" id="JH0664">
    <property type="entry name" value="JH0664"/>
</dbReference>
<dbReference type="SMR" id="P27004"/>
<dbReference type="GeneID" id="378505"/>
<dbReference type="KEGG" id="xla:378505"/>
<dbReference type="AGR" id="Xenbase:XB-GENE-6254353"/>
<dbReference type="CTD" id="378505"/>
<dbReference type="Xenbase" id="XB-GENE-6254353">
    <property type="gene designation" value="s100a10.L"/>
</dbReference>
<dbReference type="OrthoDB" id="26525at2759"/>
<dbReference type="Proteomes" id="UP000186698">
    <property type="component" value="Chromosome 8L"/>
</dbReference>
<dbReference type="Bgee" id="378505">
    <property type="expression patterns" value="Expressed in internal ear and 17 other cell types or tissues"/>
</dbReference>
<dbReference type="GO" id="GO:0005737">
    <property type="term" value="C:cytoplasm"/>
    <property type="evidence" value="ECO:0007669"/>
    <property type="project" value="TreeGrafter"/>
</dbReference>
<dbReference type="GO" id="GO:0005615">
    <property type="term" value="C:extracellular space"/>
    <property type="evidence" value="ECO:0007669"/>
    <property type="project" value="TreeGrafter"/>
</dbReference>
<dbReference type="GO" id="GO:0005509">
    <property type="term" value="F:calcium ion binding"/>
    <property type="evidence" value="ECO:0007669"/>
    <property type="project" value="TreeGrafter"/>
</dbReference>
<dbReference type="GO" id="GO:0048306">
    <property type="term" value="F:calcium-dependent protein binding"/>
    <property type="evidence" value="ECO:0007669"/>
    <property type="project" value="TreeGrafter"/>
</dbReference>
<dbReference type="CDD" id="cd05024">
    <property type="entry name" value="S-100A10"/>
    <property type="match status" value="1"/>
</dbReference>
<dbReference type="Gene3D" id="1.10.238.10">
    <property type="entry name" value="EF-hand"/>
    <property type="match status" value="1"/>
</dbReference>
<dbReference type="InterPro" id="IPR011992">
    <property type="entry name" value="EF-hand-dom_pair"/>
</dbReference>
<dbReference type="InterPro" id="IPR028476">
    <property type="entry name" value="S100-A10"/>
</dbReference>
<dbReference type="InterPro" id="IPR013787">
    <property type="entry name" value="S100_Ca-bd_sub"/>
</dbReference>
<dbReference type="PANTHER" id="PTHR11639:SF74">
    <property type="entry name" value="PROTEIN S100-A10"/>
    <property type="match status" value="1"/>
</dbReference>
<dbReference type="PANTHER" id="PTHR11639">
    <property type="entry name" value="S100 CALCIUM-BINDING PROTEIN"/>
    <property type="match status" value="1"/>
</dbReference>
<dbReference type="Pfam" id="PF01023">
    <property type="entry name" value="S_100"/>
    <property type="match status" value="1"/>
</dbReference>
<dbReference type="SMART" id="SM01394">
    <property type="entry name" value="S_100"/>
    <property type="match status" value="1"/>
</dbReference>
<dbReference type="SUPFAM" id="SSF47473">
    <property type="entry name" value="EF-hand"/>
    <property type="match status" value="1"/>
</dbReference>
<evidence type="ECO:0000305" key="1"/>
<feature type="chain" id="PRO_0000144008" description="Protein S100-A10">
    <location>
        <begin position="1"/>
        <end position="96"/>
    </location>
</feature>
<feature type="region of interest" description="Ancestral calcium site">
    <location>
        <begin position="62"/>
        <end position="73"/>
    </location>
</feature>
<proteinExistence type="inferred from homology"/>
<accession>P27004</accession>
<organism>
    <name type="scientific">Xenopus laevis</name>
    <name type="common">African clawed frog</name>
    <dbReference type="NCBI Taxonomy" id="8355"/>
    <lineage>
        <taxon>Eukaryota</taxon>
        <taxon>Metazoa</taxon>
        <taxon>Chordata</taxon>
        <taxon>Craniata</taxon>
        <taxon>Vertebrata</taxon>
        <taxon>Euteleostomi</taxon>
        <taxon>Amphibia</taxon>
        <taxon>Batrachia</taxon>
        <taxon>Anura</taxon>
        <taxon>Pipoidea</taxon>
        <taxon>Pipidae</taxon>
        <taxon>Xenopodinae</taxon>
        <taxon>Xenopus</taxon>
        <taxon>Xenopus</taxon>
    </lineage>
</organism>
<reference key="1">
    <citation type="journal article" date="1991" name="Gene">
        <title>Primary structure of human, chicken, and Xenopus laevis p11, a cellular ligand of the Src-kinase substrate, annexin II.</title>
        <authorList>
            <person name="Kube E."/>
            <person name="Weber K."/>
            <person name="Gerke V."/>
        </authorList>
    </citation>
    <scope>NUCLEOTIDE SEQUENCE [MRNA]</scope>
</reference>
<keyword id="KW-1185">Reference proteome</keyword>
<protein>
    <recommendedName>
        <fullName>Protein S100-A10</fullName>
    </recommendedName>
    <alternativeName>
        <fullName>Calpactin I light chain</fullName>
    </alternativeName>
    <alternativeName>
        <fullName>Calpactin-1 light chain</fullName>
    </alternativeName>
    <alternativeName>
        <fullName>Cellular ligand of annexin II</fullName>
    </alternativeName>
    <alternativeName>
        <fullName>S100 calcium-binding protein A10</fullName>
    </alternativeName>
    <alternativeName>
        <fullName>p10 protein</fullName>
    </alternativeName>
    <alternativeName>
        <fullName>p11</fullName>
    </alternativeName>
</protein>